<keyword id="KW-0067">ATP-binding</keyword>
<keyword id="KW-0414">Isoprene biosynthesis</keyword>
<keyword id="KW-0418">Kinase</keyword>
<keyword id="KW-0547">Nucleotide-binding</keyword>
<keyword id="KW-0808">Transferase</keyword>
<comment type="function">
    <text evidence="1">Catalyzes the phosphorylation of the position 2 hydroxy group of 4-diphosphocytidyl-2C-methyl-D-erythritol.</text>
</comment>
<comment type="catalytic activity">
    <reaction evidence="1">
        <text>4-CDP-2-C-methyl-D-erythritol + ATP = 4-CDP-2-C-methyl-D-erythritol 2-phosphate + ADP + H(+)</text>
        <dbReference type="Rhea" id="RHEA:18437"/>
        <dbReference type="ChEBI" id="CHEBI:15378"/>
        <dbReference type="ChEBI" id="CHEBI:30616"/>
        <dbReference type="ChEBI" id="CHEBI:57823"/>
        <dbReference type="ChEBI" id="CHEBI:57919"/>
        <dbReference type="ChEBI" id="CHEBI:456216"/>
        <dbReference type="EC" id="2.7.1.148"/>
    </reaction>
</comment>
<comment type="pathway">
    <text evidence="1">Isoprenoid biosynthesis; isopentenyl diphosphate biosynthesis via DXP pathway; isopentenyl diphosphate from 1-deoxy-D-xylulose 5-phosphate: step 3/6.</text>
</comment>
<comment type="similarity">
    <text evidence="1">Belongs to the GHMP kinase family. IspE subfamily.</text>
</comment>
<organism>
    <name type="scientific">Xanthomonas axonopodis pv. citri (strain 306)</name>
    <dbReference type="NCBI Taxonomy" id="190486"/>
    <lineage>
        <taxon>Bacteria</taxon>
        <taxon>Pseudomonadati</taxon>
        <taxon>Pseudomonadota</taxon>
        <taxon>Gammaproteobacteria</taxon>
        <taxon>Lysobacterales</taxon>
        <taxon>Lysobacteraceae</taxon>
        <taxon>Xanthomonas</taxon>
    </lineage>
</organism>
<gene>
    <name evidence="1" type="primary">ispE</name>
    <name type="synonym">ipk</name>
    <name type="ordered locus">XAC0948</name>
</gene>
<name>ISPE_XANAC</name>
<protein>
    <recommendedName>
        <fullName evidence="1">4-diphosphocytidyl-2-C-methyl-D-erythritol kinase</fullName>
        <shortName evidence="1">CMK</shortName>
        <ecNumber evidence="1">2.7.1.148</ecNumber>
    </recommendedName>
    <alternativeName>
        <fullName evidence="1">4-(cytidine-5'-diphospho)-2-C-methyl-D-erythritol kinase</fullName>
    </alternativeName>
</protein>
<accession>Q8PNU1</accession>
<dbReference type="EC" id="2.7.1.148" evidence="1"/>
<dbReference type="EMBL" id="AE008923">
    <property type="protein sequence ID" value="AAM35836.1"/>
    <property type="molecule type" value="Genomic_DNA"/>
</dbReference>
<dbReference type="RefSeq" id="WP_011050637.1">
    <property type="nucleotide sequence ID" value="NC_003919.1"/>
</dbReference>
<dbReference type="SMR" id="Q8PNU1"/>
<dbReference type="GeneID" id="66910134"/>
<dbReference type="KEGG" id="xac:XAC0948"/>
<dbReference type="eggNOG" id="COG1947">
    <property type="taxonomic scope" value="Bacteria"/>
</dbReference>
<dbReference type="HOGENOM" id="CLU_053057_3_0_6"/>
<dbReference type="UniPathway" id="UPA00056">
    <property type="reaction ID" value="UER00094"/>
</dbReference>
<dbReference type="Proteomes" id="UP000000576">
    <property type="component" value="Chromosome"/>
</dbReference>
<dbReference type="GO" id="GO:0050515">
    <property type="term" value="F:4-(cytidine 5'-diphospho)-2-C-methyl-D-erythritol kinase activity"/>
    <property type="evidence" value="ECO:0007669"/>
    <property type="project" value="UniProtKB-UniRule"/>
</dbReference>
<dbReference type="GO" id="GO:0005524">
    <property type="term" value="F:ATP binding"/>
    <property type="evidence" value="ECO:0007669"/>
    <property type="project" value="UniProtKB-UniRule"/>
</dbReference>
<dbReference type="GO" id="GO:0019288">
    <property type="term" value="P:isopentenyl diphosphate biosynthetic process, methylerythritol 4-phosphate pathway"/>
    <property type="evidence" value="ECO:0007669"/>
    <property type="project" value="UniProtKB-UniRule"/>
</dbReference>
<dbReference type="GO" id="GO:0016114">
    <property type="term" value="P:terpenoid biosynthetic process"/>
    <property type="evidence" value="ECO:0007669"/>
    <property type="project" value="InterPro"/>
</dbReference>
<dbReference type="FunFam" id="3.30.70.890:FF:000014">
    <property type="entry name" value="4-diphosphocytidyl-2-C-methyl-D-erythritol kinase"/>
    <property type="match status" value="1"/>
</dbReference>
<dbReference type="Gene3D" id="3.30.230.10">
    <property type="match status" value="1"/>
</dbReference>
<dbReference type="Gene3D" id="3.30.70.890">
    <property type="entry name" value="GHMP kinase, C-terminal domain"/>
    <property type="match status" value="1"/>
</dbReference>
<dbReference type="HAMAP" id="MF_00061">
    <property type="entry name" value="IspE"/>
    <property type="match status" value="1"/>
</dbReference>
<dbReference type="InterPro" id="IPR013750">
    <property type="entry name" value="GHMP_kinase_C_dom"/>
</dbReference>
<dbReference type="InterPro" id="IPR036554">
    <property type="entry name" value="GHMP_kinase_C_sf"/>
</dbReference>
<dbReference type="InterPro" id="IPR006204">
    <property type="entry name" value="GHMP_kinase_N_dom"/>
</dbReference>
<dbReference type="InterPro" id="IPR004424">
    <property type="entry name" value="IspE"/>
</dbReference>
<dbReference type="InterPro" id="IPR020568">
    <property type="entry name" value="Ribosomal_Su5_D2-typ_SF"/>
</dbReference>
<dbReference type="InterPro" id="IPR014721">
    <property type="entry name" value="Ribsml_uS5_D2-typ_fold_subgr"/>
</dbReference>
<dbReference type="NCBIfam" id="TIGR00154">
    <property type="entry name" value="ispE"/>
    <property type="match status" value="1"/>
</dbReference>
<dbReference type="PANTHER" id="PTHR43527">
    <property type="entry name" value="4-DIPHOSPHOCYTIDYL-2-C-METHYL-D-ERYTHRITOL KINASE, CHLOROPLASTIC"/>
    <property type="match status" value="1"/>
</dbReference>
<dbReference type="PANTHER" id="PTHR43527:SF2">
    <property type="entry name" value="4-DIPHOSPHOCYTIDYL-2-C-METHYL-D-ERYTHRITOL KINASE, CHLOROPLASTIC"/>
    <property type="match status" value="1"/>
</dbReference>
<dbReference type="Pfam" id="PF08544">
    <property type="entry name" value="GHMP_kinases_C"/>
    <property type="match status" value="1"/>
</dbReference>
<dbReference type="Pfam" id="PF00288">
    <property type="entry name" value="GHMP_kinases_N"/>
    <property type="match status" value="1"/>
</dbReference>
<dbReference type="PIRSF" id="PIRSF010376">
    <property type="entry name" value="IspE"/>
    <property type="match status" value="1"/>
</dbReference>
<dbReference type="SUPFAM" id="SSF55060">
    <property type="entry name" value="GHMP Kinase, C-terminal domain"/>
    <property type="match status" value="1"/>
</dbReference>
<dbReference type="SUPFAM" id="SSF54211">
    <property type="entry name" value="Ribosomal protein S5 domain 2-like"/>
    <property type="match status" value="1"/>
</dbReference>
<evidence type="ECO:0000255" key="1">
    <source>
        <dbReference type="HAMAP-Rule" id="MF_00061"/>
    </source>
</evidence>
<sequence length="295" mass="31057">MDRIALMDAPDTDWSAWPAPAKLNLFLQITGRRADGYHLLQTVFRLLDWGDTVHLRVRSGGQIRRVGESLPGVAEDDDLVIRAARLLQSATGAQAGAEIRVDKRIPAGGGFGGGSSDAATVLVALNALWGLGLAADALAELGLQLGADVPVFVRGHNAWAEGVGEQLTPISLPEAAYLLVDPGVHVPTPALFRSQELTRDAAPAKIADFASGSLLDNAFEPVLRRREPAVEAVFQALSRVGTPRLTGSGSGCFVEFATRAAAEQALAQLPGGLRAWVAEGASHSPLLDARDARQV</sequence>
<feature type="chain" id="PRO_0000189291" description="4-diphosphocytidyl-2-C-methyl-D-erythritol kinase">
    <location>
        <begin position="1"/>
        <end position="295"/>
    </location>
</feature>
<feature type="active site" evidence="1">
    <location>
        <position position="22"/>
    </location>
</feature>
<feature type="active site" evidence="1">
    <location>
        <position position="148"/>
    </location>
</feature>
<feature type="binding site" evidence="1">
    <location>
        <begin position="106"/>
        <end position="116"/>
    </location>
    <ligand>
        <name>ATP</name>
        <dbReference type="ChEBI" id="CHEBI:30616"/>
    </ligand>
</feature>
<proteinExistence type="inferred from homology"/>
<reference key="1">
    <citation type="journal article" date="2002" name="Nature">
        <title>Comparison of the genomes of two Xanthomonas pathogens with differing host specificities.</title>
        <authorList>
            <person name="da Silva A.C.R."/>
            <person name="Ferro J.A."/>
            <person name="Reinach F.C."/>
            <person name="Farah C.S."/>
            <person name="Furlan L.R."/>
            <person name="Quaggio R.B."/>
            <person name="Monteiro-Vitorello C.B."/>
            <person name="Van Sluys M.A."/>
            <person name="Almeida N.F. Jr."/>
            <person name="Alves L.M.C."/>
            <person name="do Amaral A.M."/>
            <person name="Bertolini M.C."/>
            <person name="Camargo L.E.A."/>
            <person name="Camarotte G."/>
            <person name="Cannavan F."/>
            <person name="Cardozo J."/>
            <person name="Chambergo F."/>
            <person name="Ciapina L.P."/>
            <person name="Cicarelli R.M.B."/>
            <person name="Coutinho L.L."/>
            <person name="Cursino-Santos J.R."/>
            <person name="El-Dorry H."/>
            <person name="Faria J.B."/>
            <person name="Ferreira A.J.S."/>
            <person name="Ferreira R.C.C."/>
            <person name="Ferro M.I.T."/>
            <person name="Formighieri E.F."/>
            <person name="Franco M.C."/>
            <person name="Greggio C.C."/>
            <person name="Gruber A."/>
            <person name="Katsuyama A.M."/>
            <person name="Kishi L.T."/>
            <person name="Leite R.P."/>
            <person name="Lemos E.G.M."/>
            <person name="Lemos M.V.F."/>
            <person name="Locali E.C."/>
            <person name="Machado M.A."/>
            <person name="Madeira A.M.B.N."/>
            <person name="Martinez-Rossi N.M."/>
            <person name="Martins E.C."/>
            <person name="Meidanis J."/>
            <person name="Menck C.F.M."/>
            <person name="Miyaki C.Y."/>
            <person name="Moon D.H."/>
            <person name="Moreira L.M."/>
            <person name="Novo M.T.M."/>
            <person name="Okura V.K."/>
            <person name="Oliveira M.C."/>
            <person name="Oliveira V.R."/>
            <person name="Pereira H.A."/>
            <person name="Rossi A."/>
            <person name="Sena J.A.D."/>
            <person name="Silva C."/>
            <person name="de Souza R.F."/>
            <person name="Spinola L.A.F."/>
            <person name="Takita M.A."/>
            <person name="Tamura R.E."/>
            <person name="Teixeira E.C."/>
            <person name="Tezza R.I.D."/>
            <person name="Trindade dos Santos M."/>
            <person name="Truffi D."/>
            <person name="Tsai S.M."/>
            <person name="White F.F."/>
            <person name="Setubal J.C."/>
            <person name="Kitajima J.P."/>
        </authorList>
    </citation>
    <scope>NUCLEOTIDE SEQUENCE [LARGE SCALE GENOMIC DNA]</scope>
    <source>
        <strain>306</strain>
    </source>
</reference>